<name>LAMB_ENT38</name>
<accession>A4W5F0</accession>
<protein>
    <recommendedName>
        <fullName evidence="1">Maltoporin</fullName>
    </recommendedName>
    <alternativeName>
        <fullName evidence="1">Maltose-inducible porin</fullName>
    </alternativeName>
</protein>
<feature type="signal peptide" evidence="1">
    <location>
        <begin position="1"/>
        <end position="24"/>
    </location>
</feature>
<feature type="chain" id="PRO_5000237557" description="Maltoporin" evidence="1">
    <location>
        <begin position="25"/>
        <end position="444"/>
    </location>
</feature>
<feature type="site" description="Greasy slide, important in sugar transport" evidence="1">
    <location>
        <position position="30"/>
    </location>
</feature>
<feature type="site" description="Greasy slide, important in sugar transport" evidence="1">
    <location>
        <position position="65"/>
    </location>
</feature>
<feature type="site" description="Greasy slide, important in sugar transport" evidence="1">
    <location>
        <position position="98"/>
    </location>
</feature>
<feature type="site" description="Important in sugar transport" evidence="1">
    <location>
        <position position="142"/>
    </location>
</feature>
<feature type="site" description="Greasy slide, important in sugar transport" evidence="1">
    <location>
        <position position="251"/>
    </location>
</feature>
<feature type="site" description="Greasy slide, important in sugar transport" evidence="1">
    <location>
        <position position="381"/>
    </location>
</feature>
<feature type="site" description="Greasy slide, important in sugar transport" evidence="1">
    <location>
        <position position="443"/>
    </location>
</feature>
<proteinExistence type="inferred from homology"/>
<reference key="1">
    <citation type="journal article" date="2010" name="PLoS Genet.">
        <title>Genome sequence of the plant growth promoting endophytic bacterium Enterobacter sp. 638.</title>
        <authorList>
            <person name="Taghavi S."/>
            <person name="van der Lelie D."/>
            <person name="Hoffman A."/>
            <person name="Zhang Y.B."/>
            <person name="Walla M.D."/>
            <person name="Vangronsveld J."/>
            <person name="Newman L."/>
            <person name="Monchy S."/>
        </authorList>
    </citation>
    <scope>NUCLEOTIDE SEQUENCE [LARGE SCALE GENOMIC DNA]</scope>
    <source>
        <strain>638</strain>
    </source>
</reference>
<organism>
    <name type="scientific">Enterobacter sp. (strain 638)</name>
    <dbReference type="NCBI Taxonomy" id="399742"/>
    <lineage>
        <taxon>Bacteria</taxon>
        <taxon>Pseudomonadati</taxon>
        <taxon>Pseudomonadota</taxon>
        <taxon>Gammaproteobacteria</taxon>
        <taxon>Enterobacterales</taxon>
        <taxon>Enterobacteriaceae</taxon>
        <taxon>Enterobacter</taxon>
    </lineage>
</organism>
<keyword id="KW-0998">Cell outer membrane</keyword>
<keyword id="KW-0406">Ion transport</keyword>
<keyword id="KW-0472">Membrane</keyword>
<keyword id="KW-0626">Porin</keyword>
<keyword id="KW-0732">Signal</keyword>
<keyword id="KW-0762">Sugar transport</keyword>
<keyword id="KW-0812">Transmembrane</keyword>
<keyword id="KW-1134">Transmembrane beta strand</keyword>
<keyword id="KW-0813">Transport</keyword>
<gene>
    <name evidence="1" type="primary">lamB</name>
    <name type="ordered locus">Ent638_0241</name>
</gene>
<sequence length="444" mass="49236">MITLRKVPLALAIAAGILSAQAGAVDFKGYARSGIGWTGSGGEQQCFQATGAQSKYRLGNECETYAEIKLGQEVWKEGDKSFYFDTNVAYSVAQQNDWEATDPAFREANVQGKNLIDWLPGSTIWAGKRFYQRHDVHMIDFYYWDISGPGAGLENIDVGFGKLSLAATRSSEAGGSSSFASNSIYDYTTRTANDVFDVRLAQMEINPGGTLELGADYGRANERDGYYLVDGASKDGWMFTAEHTQSMLKGFNKFVLQYATDSMTSQGKGLSQGSSIGTSDNINYAMNNNGHLWRVLDHGAISLGDSWDLMYVGMYQDINLDSNNGTKWWTVGVRPMFKWTPIMSTLLEVGYDNVKSQETGDTNNQYKITLAQQWQAGDSIWSRPAIRVFATYAKWDEKWGYAPSGNNTKAGYNPGVAYSDTSLNSFSRGDNDEWSFGAQMEIWW</sequence>
<dbReference type="EMBL" id="CP000653">
    <property type="protein sequence ID" value="ABP58930.1"/>
    <property type="molecule type" value="Genomic_DNA"/>
</dbReference>
<dbReference type="SMR" id="A4W5F0"/>
<dbReference type="STRING" id="399742.Ent638_0241"/>
<dbReference type="KEGG" id="ent:Ent638_0241"/>
<dbReference type="eggNOG" id="COG4580">
    <property type="taxonomic scope" value="Bacteria"/>
</dbReference>
<dbReference type="HOGENOM" id="CLU_032473_4_1_6"/>
<dbReference type="Proteomes" id="UP000000230">
    <property type="component" value="Chromosome"/>
</dbReference>
<dbReference type="GO" id="GO:0009279">
    <property type="term" value="C:cell outer membrane"/>
    <property type="evidence" value="ECO:0007669"/>
    <property type="project" value="UniProtKB-SubCell"/>
</dbReference>
<dbReference type="GO" id="GO:0046930">
    <property type="term" value="C:pore complex"/>
    <property type="evidence" value="ECO:0007669"/>
    <property type="project" value="UniProtKB-KW"/>
</dbReference>
<dbReference type="GO" id="GO:0042958">
    <property type="term" value="F:maltodextrin transmembrane transporter activity"/>
    <property type="evidence" value="ECO:0007669"/>
    <property type="project" value="InterPro"/>
</dbReference>
<dbReference type="GO" id="GO:0015481">
    <property type="term" value="F:maltose transporting porin activity"/>
    <property type="evidence" value="ECO:0007669"/>
    <property type="project" value="InterPro"/>
</dbReference>
<dbReference type="GO" id="GO:0006811">
    <property type="term" value="P:monoatomic ion transport"/>
    <property type="evidence" value="ECO:0007669"/>
    <property type="project" value="UniProtKB-KW"/>
</dbReference>
<dbReference type="CDD" id="cd01346">
    <property type="entry name" value="Maltoporin-like"/>
    <property type="match status" value="1"/>
</dbReference>
<dbReference type="FunFam" id="2.40.170.10:FF:000001">
    <property type="entry name" value="Maltoporin"/>
    <property type="match status" value="1"/>
</dbReference>
<dbReference type="Gene3D" id="2.40.170.10">
    <property type="entry name" value="Porin, LamB type"/>
    <property type="match status" value="1"/>
</dbReference>
<dbReference type="HAMAP" id="MF_01301">
    <property type="entry name" value="LamB"/>
    <property type="match status" value="1"/>
</dbReference>
<dbReference type="InterPro" id="IPR050286">
    <property type="entry name" value="G_neg_Bact_CarbUptk_Porin"/>
</dbReference>
<dbReference type="InterPro" id="IPR023738">
    <property type="entry name" value="Maltoporin"/>
</dbReference>
<dbReference type="InterPro" id="IPR003192">
    <property type="entry name" value="Porin_LamB"/>
</dbReference>
<dbReference type="InterPro" id="IPR036998">
    <property type="entry name" value="Porin_LamB_sf"/>
</dbReference>
<dbReference type="NCBIfam" id="NF006860">
    <property type="entry name" value="PRK09360.1"/>
    <property type="match status" value="1"/>
</dbReference>
<dbReference type="PANTHER" id="PTHR38762">
    <property type="entry name" value="CRYPTIC OUTER MEMBRANE PORIN BGLH-RELATED"/>
    <property type="match status" value="1"/>
</dbReference>
<dbReference type="PANTHER" id="PTHR38762:SF1">
    <property type="entry name" value="CRYPTIC OUTER MEMBRANE PORIN BGLH-RELATED"/>
    <property type="match status" value="1"/>
</dbReference>
<dbReference type="Pfam" id="PF02264">
    <property type="entry name" value="LamB"/>
    <property type="match status" value="1"/>
</dbReference>
<dbReference type="SUPFAM" id="SSF56935">
    <property type="entry name" value="Porins"/>
    <property type="match status" value="1"/>
</dbReference>
<evidence type="ECO:0000255" key="1">
    <source>
        <dbReference type="HAMAP-Rule" id="MF_01301"/>
    </source>
</evidence>
<comment type="function">
    <text evidence="1">Involved in the transport of maltose and maltodextrins.</text>
</comment>
<comment type="catalytic activity">
    <reaction evidence="1">
        <text>beta-maltose(in) = beta-maltose(out)</text>
        <dbReference type="Rhea" id="RHEA:29731"/>
        <dbReference type="ChEBI" id="CHEBI:18147"/>
    </reaction>
</comment>
<comment type="subunit">
    <text evidence="1">Homotrimer formed of three 18-stranded antiparallel beta-barrels, containing three independent channels.</text>
</comment>
<comment type="subcellular location">
    <subcellularLocation>
        <location evidence="1">Cell outer membrane</location>
        <topology evidence="1">Multi-pass membrane protein</topology>
    </subcellularLocation>
</comment>
<comment type="induction">
    <text evidence="1">By maltose.</text>
</comment>
<comment type="similarity">
    <text evidence="1">Belongs to the porin LamB (TC 1.B.3) family.</text>
</comment>